<reference key="1">
    <citation type="journal article" date="2006" name="PLoS Biol.">
        <title>Metabolic complementarity and genomics of the dual bacterial symbiosis of sharpshooters.</title>
        <authorList>
            <person name="Wu D."/>
            <person name="Daugherty S.C."/>
            <person name="Van Aken S.E."/>
            <person name="Pai G.H."/>
            <person name="Watkins K.L."/>
            <person name="Khouri H."/>
            <person name="Tallon L.J."/>
            <person name="Zaborsky J.M."/>
            <person name="Dunbar H.E."/>
            <person name="Tran P.L."/>
            <person name="Moran N.A."/>
            <person name="Eisen J.A."/>
        </authorList>
    </citation>
    <scope>NUCLEOTIDE SEQUENCE [LARGE SCALE GENOMIC DNA]</scope>
</reference>
<organism>
    <name type="scientific">Baumannia cicadellinicola subsp. Homalodisca coagulata</name>
    <dbReference type="NCBI Taxonomy" id="374463"/>
    <lineage>
        <taxon>Bacteria</taxon>
        <taxon>Pseudomonadati</taxon>
        <taxon>Pseudomonadota</taxon>
        <taxon>Gammaproteobacteria</taxon>
        <taxon>Candidatus Palibaumannia</taxon>
    </lineage>
</organism>
<evidence type="ECO:0000255" key="1">
    <source>
        <dbReference type="HAMAP-Rule" id="MF_00157"/>
    </source>
</evidence>
<keyword id="KW-0269">Exonuclease</keyword>
<keyword id="KW-0378">Hydrolase</keyword>
<keyword id="KW-0460">Magnesium</keyword>
<keyword id="KW-0479">Metal-binding</keyword>
<keyword id="KW-0540">Nuclease</keyword>
<keyword id="KW-1185">Reference proteome</keyword>
<keyword id="KW-0819">tRNA processing</keyword>
<name>RNT_BAUCH</name>
<dbReference type="EC" id="3.1.13.-" evidence="1"/>
<dbReference type="EMBL" id="CP000238">
    <property type="protein sequence ID" value="ABF14018.1"/>
    <property type="molecule type" value="Genomic_DNA"/>
</dbReference>
<dbReference type="RefSeq" id="WP_011520296.1">
    <property type="nucleotide sequence ID" value="NC_007984.1"/>
</dbReference>
<dbReference type="SMR" id="Q1LU01"/>
<dbReference type="STRING" id="374463.BCI_0085"/>
<dbReference type="KEGG" id="bci:BCI_0085"/>
<dbReference type="HOGENOM" id="CLU_082724_0_0_6"/>
<dbReference type="OrthoDB" id="9778264at2"/>
<dbReference type="Proteomes" id="UP000002427">
    <property type="component" value="Chromosome"/>
</dbReference>
<dbReference type="GO" id="GO:0005829">
    <property type="term" value="C:cytosol"/>
    <property type="evidence" value="ECO:0007669"/>
    <property type="project" value="TreeGrafter"/>
</dbReference>
<dbReference type="GO" id="GO:0008408">
    <property type="term" value="F:3'-5' exonuclease activity"/>
    <property type="evidence" value="ECO:0007669"/>
    <property type="project" value="TreeGrafter"/>
</dbReference>
<dbReference type="GO" id="GO:0000287">
    <property type="term" value="F:magnesium ion binding"/>
    <property type="evidence" value="ECO:0007669"/>
    <property type="project" value="UniProtKB-UniRule"/>
</dbReference>
<dbReference type="GO" id="GO:0003676">
    <property type="term" value="F:nucleic acid binding"/>
    <property type="evidence" value="ECO:0007669"/>
    <property type="project" value="InterPro"/>
</dbReference>
<dbReference type="GO" id="GO:0016896">
    <property type="term" value="F:RNA exonuclease activity, producing 5'-phosphomonoesters"/>
    <property type="evidence" value="ECO:0007669"/>
    <property type="project" value="UniProtKB-UniRule"/>
</dbReference>
<dbReference type="GO" id="GO:0045004">
    <property type="term" value="P:DNA replication proofreading"/>
    <property type="evidence" value="ECO:0007669"/>
    <property type="project" value="TreeGrafter"/>
</dbReference>
<dbReference type="GO" id="GO:0008033">
    <property type="term" value="P:tRNA processing"/>
    <property type="evidence" value="ECO:0007669"/>
    <property type="project" value="UniProtKB-KW"/>
</dbReference>
<dbReference type="FunFam" id="3.30.420.10:FF:000009">
    <property type="entry name" value="Ribonuclease T"/>
    <property type="match status" value="1"/>
</dbReference>
<dbReference type="Gene3D" id="3.30.420.10">
    <property type="entry name" value="Ribonuclease H-like superfamily/Ribonuclease H"/>
    <property type="match status" value="1"/>
</dbReference>
<dbReference type="HAMAP" id="MF_00157">
    <property type="entry name" value="RNase_T"/>
    <property type="match status" value="1"/>
</dbReference>
<dbReference type="InterPro" id="IPR013520">
    <property type="entry name" value="Exonuclease_RNaseT/DNA_pol3"/>
</dbReference>
<dbReference type="InterPro" id="IPR005987">
    <property type="entry name" value="RNase_T"/>
</dbReference>
<dbReference type="InterPro" id="IPR012337">
    <property type="entry name" value="RNaseH-like_sf"/>
</dbReference>
<dbReference type="InterPro" id="IPR036397">
    <property type="entry name" value="RNaseH_sf"/>
</dbReference>
<dbReference type="NCBIfam" id="TIGR01298">
    <property type="entry name" value="RNaseT"/>
    <property type="match status" value="1"/>
</dbReference>
<dbReference type="PANTHER" id="PTHR30231">
    <property type="entry name" value="DNA POLYMERASE III SUBUNIT EPSILON"/>
    <property type="match status" value="1"/>
</dbReference>
<dbReference type="PANTHER" id="PTHR30231:SF2">
    <property type="entry name" value="RIBONUCLEASE T"/>
    <property type="match status" value="1"/>
</dbReference>
<dbReference type="Pfam" id="PF00929">
    <property type="entry name" value="RNase_T"/>
    <property type="match status" value="1"/>
</dbReference>
<dbReference type="SMART" id="SM00479">
    <property type="entry name" value="EXOIII"/>
    <property type="match status" value="1"/>
</dbReference>
<dbReference type="SUPFAM" id="SSF53098">
    <property type="entry name" value="Ribonuclease H-like"/>
    <property type="match status" value="1"/>
</dbReference>
<proteinExistence type="inferred from homology"/>
<protein>
    <recommendedName>
        <fullName evidence="1">Ribonuclease T</fullName>
        <ecNumber evidence="1">3.1.13.-</ecNumber>
    </recommendedName>
    <alternativeName>
        <fullName evidence="1">Exoribonuclease T</fullName>
        <shortName evidence="1">RNase T</shortName>
    </alternativeName>
</protein>
<accession>Q1LU01</accession>
<sequence>MAEKDEVNTLRARFRGFYPVVIDVETAGFNSGTDALLEIAAITLQMDHHGWLKTHKTLHFNIEPFPGSILQPEALIFNGIDPDNPLRYAVTEREALYELFTIVHQGIKDDDCHRAILVAHNAAFDHSFLMAAANRTKIKHNPFHPFATFDTAALSGLVLGQTVLLKACLTAGIPFNTSEAHSALYDAERTAELFCELVNRWKRLGGWTKVTTSSIHSV</sequence>
<feature type="chain" id="PRO_1000011385" description="Ribonuclease T">
    <location>
        <begin position="1"/>
        <end position="218"/>
    </location>
</feature>
<feature type="domain" description="Exonuclease" evidence="1">
    <location>
        <begin position="20"/>
        <end position="194"/>
    </location>
</feature>
<feature type="active site" description="Proton donor/acceptor" evidence="1">
    <location>
        <position position="181"/>
    </location>
</feature>
<feature type="binding site" evidence="1">
    <location>
        <position position="23"/>
    </location>
    <ligand>
        <name>Mg(2+)</name>
        <dbReference type="ChEBI" id="CHEBI:18420"/>
        <label>1</label>
        <note>catalytic</note>
    </ligand>
</feature>
<feature type="binding site" evidence="1">
    <location>
        <position position="23"/>
    </location>
    <ligand>
        <name>Mg(2+)</name>
        <dbReference type="ChEBI" id="CHEBI:18420"/>
        <label>2</label>
        <note>catalytic</note>
    </ligand>
</feature>
<feature type="binding site" evidence="1">
    <location>
        <position position="25"/>
    </location>
    <ligand>
        <name>Mg(2+)</name>
        <dbReference type="ChEBI" id="CHEBI:18420"/>
        <label>2</label>
        <note>catalytic</note>
    </ligand>
</feature>
<feature type="binding site" evidence="1">
    <location>
        <position position="181"/>
    </location>
    <ligand>
        <name>Mg(2+)</name>
        <dbReference type="ChEBI" id="CHEBI:18420"/>
        <label>2</label>
        <note>catalytic</note>
    </ligand>
</feature>
<feature type="binding site" evidence="1">
    <location>
        <position position="186"/>
    </location>
    <ligand>
        <name>Mg(2+)</name>
        <dbReference type="ChEBI" id="CHEBI:18420"/>
        <label>2</label>
        <note>catalytic</note>
    </ligand>
</feature>
<feature type="site" description="Important for substrate binding and specificity" evidence="1">
    <location>
        <position position="29"/>
    </location>
</feature>
<feature type="site" description="Important for substrate binding and specificity" evidence="1">
    <location>
        <position position="77"/>
    </location>
</feature>
<feature type="site" description="Important for substrate binding and specificity" evidence="1">
    <location>
        <position position="124"/>
    </location>
</feature>
<feature type="site" description="Important for substrate binding and specificity" evidence="1">
    <location>
        <position position="146"/>
    </location>
</feature>
<gene>
    <name evidence="1" type="primary">rnt</name>
    <name type="ordered locus">BCI_0085</name>
</gene>
<comment type="function">
    <text evidence="1">Trims short 3' overhangs of a variety of RNA species, leaving a one or two nucleotide 3' overhang. Responsible for the end-turnover of tRNA: specifically removes the terminal AMP residue from uncharged tRNA (tRNA-C-C-A). Also appears to be involved in tRNA biosynthesis.</text>
</comment>
<comment type="cofactor">
    <cofactor evidence="1">
        <name>Mg(2+)</name>
        <dbReference type="ChEBI" id="CHEBI:18420"/>
    </cofactor>
    <text evidence="1">Binds two Mg(2+) per subunit. The active form of the enzyme binds two Mg(2+) ions in its active site. The first Mg(2+) forms only one salt bridge with the protein.</text>
</comment>
<comment type="subunit">
    <text evidence="1">Homodimer.</text>
</comment>
<comment type="similarity">
    <text evidence="1">Belongs to the RNase T family.</text>
</comment>